<name>RL18_HELPG</name>
<proteinExistence type="inferred from homology"/>
<feature type="chain" id="PRO_1000142675" description="Large ribosomal subunit protein uL18">
    <location>
        <begin position="1"/>
        <end position="118"/>
    </location>
</feature>
<sequence length="118" mass="13464">MNAKALYKKKALRDRRKLRIKSKLLGDALRPRVSVFRSNRYFYAQAIDDVKQSTITHIDGRKMGFKNTQEDAKKLGALFAEELKKAGIERAVYDRNGYLYHGVVAAFAESLRENGIAL</sequence>
<organism>
    <name type="scientific">Helicobacter pylori (strain G27)</name>
    <dbReference type="NCBI Taxonomy" id="563041"/>
    <lineage>
        <taxon>Bacteria</taxon>
        <taxon>Pseudomonadati</taxon>
        <taxon>Campylobacterota</taxon>
        <taxon>Epsilonproteobacteria</taxon>
        <taxon>Campylobacterales</taxon>
        <taxon>Helicobacteraceae</taxon>
        <taxon>Helicobacter</taxon>
    </lineage>
</organism>
<accession>B5Z8V1</accession>
<reference key="1">
    <citation type="journal article" date="2009" name="J. Bacteriol.">
        <title>The complete genome sequence of Helicobacter pylori strain G27.</title>
        <authorList>
            <person name="Baltrus D.A."/>
            <person name="Amieva M.R."/>
            <person name="Covacci A."/>
            <person name="Lowe T.M."/>
            <person name="Merrell D.S."/>
            <person name="Ottemann K.M."/>
            <person name="Stein M."/>
            <person name="Salama N.R."/>
            <person name="Guillemin K."/>
        </authorList>
    </citation>
    <scope>NUCLEOTIDE SEQUENCE [LARGE SCALE GENOMIC DNA]</scope>
    <source>
        <strain>G27</strain>
    </source>
</reference>
<protein>
    <recommendedName>
        <fullName evidence="1">Large ribosomal subunit protein uL18</fullName>
    </recommendedName>
    <alternativeName>
        <fullName evidence="2">50S ribosomal protein L18</fullName>
    </alternativeName>
</protein>
<evidence type="ECO:0000255" key="1">
    <source>
        <dbReference type="HAMAP-Rule" id="MF_01337"/>
    </source>
</evidence>
<evidence type="ECO:0000305" key="2"/>
<comment type="function">
    <text evidence="1">This is one of the proteins that bind and probably mediate the attachment of the 5S RNA into the large ribosomal subunit, where it forms part of the central protuberance.</text>
</comment>
<comment type="subunit">
    <text evidence="1">Part of the 50S ribosomal subunit; part of the 5S rRNA/L5/L18/L25 subcomplex. Contacts the 5S and 23S rRNAs.</text>
</comment>
<comment type="similarity">
    <text evidence="1">Belongs to the universal ribosomal protein uL18 family.</text>
</comment>
<gene>
    <name evidence="1" type="primary">rplR</name>
    <name type="ordered locus">HPG27_1252</name>
</gene>
<keyword id="KW-1185">Reference proteome</keyword>
<keyword id="KW-0687">Ribonucleoprotein</keyword>
<keyword id="KW-0689">Ribosomal protein</keyword>
<keyword id="KW-0694">RNA-binding</keyword>
<keyword id="KW-0699">rRNA-binding</keyword>
<dbReference type="EMBL" id="CP001173">
    <property type="protein sequence ID" value="ACI28000.1"/>
    <property type="molecule type" value="Genomic_DNA"/>
</dbReference>
<dbReference type="RefSeq" id="WP_000991853.1">
    <property type="nucleotide sequence ID" value="NC_011333.1"/>
</dbReference>
<dbReference type="SMR" id="B5Z8V1"/>
<dbReference type="KEGG" id="hpg:HPG27_1252"/>
<dbReference type="HOGENOM" id="CLU_098841_0_1_7"/>
<dbReference type="Proteomes" id="UP000001735">
    <property type="component" value="Chromosome"/>
</dbReference>
<dbReference type="GO" id="GO:0022625">
    <property type="term" value="C:cytosolic large ribosomal subunit"/>
    <property type="evidence" value="ECO:0007669"/>
    <property type="project" value="TreeGrafter"/>
</dbReference>
<dbReference type="GO" id="GO:0008097">
    <property type="term" value="F:5S rRNA binding"/>
    <property type="evidence" value="ECO:0007669"/>
    <property type="project" value="TreeGrafter"/>
</dbReference>
<dbReference type="GO" id="GO:0003735">
    <property type="term" value="F:structural constituent of ribosome"/>
    <property type="evidence" value="ECO:0007669"/>
    <property type="project" value="InterPro"/>
</dbReference>
<dbReference type="GO" id="GO:0006412">
    <property type="term" value="P:translation"/>
    <property type="evidence" value="ECO:0007669"/>
    <property type="project" value="UniProtKB-UniRule"/>
</dbReference>
<dbReference type="CDD" id="cd00432">
    <property type="entry name" value="Ribosomal_L18_L5e"/>
    <property type="match status" value="1"/>
</dbReference>
<dbReference type="Gene3D" id="3.30.420.100">
    <property type="match status" value="1"/>
</dbReference>
<dbReference type="HAMAP" id="MF_01337_B">
    <property type="entry name" value="Ribosomal_uL18_B"/>
    <property type="match status" value="1"/>
</dbReference>
<dbReference type="InterPro" id="IPR004389">
    <property type="entry name" value="Ribosomal_uL18_bac-type"/>
</dbReference>
<dbReference type="InterPro" id="IPR005484">
    <property type="entry name" value="Ribosomal_uL18_bac/euk"/>
</dbReference>
<dbReference type="NCBIfam" id="TIGR00060">
    <property type="entry name" value="L18_bact"/>
    <property type="match status" value="1"/>
</dbReference>
<dbReference type="PANTHER" id="PTHR12899">
    <property type="entry name" value="39S RIBOSOMAL PROTEIN L18, MITOCHONDRIAL"/>
    <property type="match status" value="1"/>
</dbReference>
<dbReference type="PANTHER" id="PTHR12899:SF3">
    <property type="entry name" value="LARGE RIBOSOMAL SUBUNIT PROTEIN UL18M"/>
    <property type="match status" value="1"/>
</dbReference>
<dbReference type="Pfam" id="PF00861">
    <property type="entry name" value="Ribosomal_L18p"/>
    <property type="match status" value="1"/>
</dbReference>
<dbReference type="SUPFAM" id="SSF53137">
    <property type="entry name" value="Translational machinery components"/>
    <property type="match status" value="1"/>
</dbReference>